<accession>Q6V7J5</accession>
<sequence length="119" mass="13626">MSRSVALAVLALLSLSGLEAIQRTPKIQVYSRHPPENGKPNFLNCYVSGFHPSDIEVDLLKNGEKMGKVEHSDLSFSKDWSFYLLYYTEFTPNEKDEYACRVNHVTLSGPRTVKWDRDM</sequence>
<dbReference type="EMBL" id="AY349163">
    <property type="protein sequence ID" value="AAR01874.1"/>
    <property type="molecule type" value="mRNA"/>
</dbReference>
<dbReference type="EMBL" id="AY445834">
    <property type="protein sequence ID" value="AAR11482.1"/>
    <property type="molecule type" value="mRNA"/>
</dbReference>
<dbReference type="RefSeq" id="NP_001040602.1">
    <property type="nucleotide sequence ID" value="NM_001047137.1"/>
</dbReference>
<dbReference type="PDB" id="3JTT">
    <property type="method" value="X-ray"/>
    <property type="resolution" value="2.80 A"/>
    <property type="chains" value="B/E/H=21-119"/>
</dbReference>
<dbReference type="PDB" id="3RWC">
    <property type="method" value="X-ray"/>
    <property type="resolution" value="2.50 A"/>
    <property type="chains" value="B/E=21-119"/>
</dbReference>
<dbReference type="PDB" id="3RWD">
    <property type="method" value="X-ray"/>
    <property type="resolution" value="2.60 A"/>
    <property type="chains" value="B/E=21-119"/>
</dbReference>
<dbReference type="PDB" id="3RWE">
    <property type="method" value="X-ray"/>
    <property type="resolution" value="2.40 A"/>
    <property type="chains" value="B=21-119"/>
</dbReference>
<dbReference type="PDB" id="3RWF">
    <property type="method" value="X-ray"/>
    <property type="resolution" value="2.60 A"/>
    <property type="chains" value="B=21-119"/>
</dbReference>
<dbReference type="PDB" id="3RWG">
    <property type="method" value="X-ray"/>
    <property type="resolution" value="2.10 A"/>
    <property type="chains" value="B=21-119"/>
</dbReference>
<dbReference type="PDB" id="3RWH">
    <property type="method" value="X-ray"/>
    <property type="resolution" value="2.60 A"/>
    <property type="chains" value="B/E=21-119"/>
</dbReference>
<dbReference type="PDB" id="3RWI">
    <property type="method" value="X-ray"/>
    <property type="resolution" value="2.01 A"/>
    <property type="chains" value="B=21-119"/>
</dbReference>
<dbReference type="PDB" id="4ZFZ">
    <property type="method" value="X-ray"/>
    <property type="resolution" value="1.76 A"/>
    <property type="chains" value="B/E/H/K=20-119"/>
</dbReference>
<dbReference type="PDB" id="6IWG">
    <property type="method" value="X-ray"/>
    <property type="resolution" value="1.80 A"/>
    <property type="chains" value="B=20-119"/>
</dbReference>
<dbReference type="PDB" id="6IWH">
    <property type="method" value="X-ray"/>
    <property type="resolution" value="1.95 A"/>
    <property type="chains" value="B=20-119"/>
</dbReference>
<dbReference type="PDB" id="6LAH">
    <property type="method" value="X-ray"/>
    <property type="resolution" value="1.87 A"/>
    <property type="chains" value="B/D=20-119"/>
</dbReference>
<dbReference type="PDB" id="6LAM">
    <property type="method" value="X-ray"/>
    <property type="resolution" value="1.80 A"/>
    <property type="chains" value="B/D=20-119"/>
</dbReference>
<dbReference type="PDB" id="6LB2">
    <property type="method" value="X-ray"/>
    <property type="resolution" value="1.69 A"/>
    <property type="chains" value="B/D=20-119"/>
</dbReference>
<dbReference type="PDB" id="6LT6">
    <property type="method" value="X-ray"/>
    <property type="resolution" value="2.15 A"/>
    <property type="chains" value="B=20-119"/>
</dbReference>
<dbReference type="PDB" id="7BYD">
    <property type="method" value="X-ray"/>
    <property type="resolution" value="2.80 A"/>
    <property type="chains" value="B/G=20-119"/>
</dbReference>
<dbReference type="PDBsum" id="3JTT"/>
<dbReference type="PDBsum" id="3RWC"/>
<dbReference type="PDBsum" id="3RWD"/>
<dbReference type="PDBsum" id="3RWE"/>
<dbReference type="PDBsum" id="3RWF"/>
<dbReference type="PDBsum" id="3RWG"/>
<dbReference type="PDBsum" id="3RWH"/>
<dbReference type="PDBsum" id="3RWI"/>
<dbReference type="PDBsum" id="4ZFZ"/>
<dbReference type="PDBsum" id="6IWG"/>
<dbReference type="PDBsum" id="6IWH"/>
<dbReference type="PDBsum" id="6LAH"/>
<dbReference type="PDBsum" id="6LAM"/>
<dbReference type="PDBsum" id="6LB2"/>
<dbReference type="PDBsum" id="6LT6"/>
<dbReference type="PDBsum" id="7BYD"/>
<dbReference type="SMR" id="Q6V7J5"/>
<dbReference type="FunCoup" id="Q6V7J5">
    <property type="interactions" value="541"/>
</dbReference>
<dbReference type="STRING" id="9544.ENSMMUP00000075968"/>
<dbReference type="PaxDb" id="9544-ENSMMUP00000005012"/>
<dbReference type="Ensembl" id="ENSMMUT00000005322.4">
    <property type="protein sequence ID" value="ENSMMUP00000005012.4"/>
    <property type="gene ID" value="ENSMMUG00000060797.1"/>
</dbReference>
<dbReference type="Ensembl" id="ENSMMUT00000084426.1">
    <property type="protein sequence ID" value="ENSMMUP00000075968.1"/>
    <property type="gene ID" value="ENSMMUG00000060797.1"/>
</dbReference>
<dbReference type="GeneID" id="712428"/>
<dbReference type="KEGG" id="mcc:712428"/>
<dbReference type="CTD" id="567"/>
<dbReference type="VEuPathDB" id="HostDB:ENSMMUG00000060797"/>
<dbReference type="VGNC" id="VGNC:70203">
    <property type="gene designation" value="B2M"/>
</dbReference>
<dbReference type="eggNOG" id="ENOG502S8GM">
    <property type="taxonomic scope" value="Eukaryota"/>
</dbReference>
<dbReference type="GeneTree" id="ENSGT00690000102227"/>
<dbReference type="InParanoid" id="Q6V7J5"/>
<dbReference type="OMA" id="EDVFSCR"/>
<dbReference type="OrthoDB" id="9949628at2759"/>
<dbReference type="EvolutionaryTrace" id="Q6V7J5"/>
<dbReference type="Proteomes" id="UP000006718">
    <property type="component" value="Chromosome 7"/>
</dbReference>
<dbReference type="Bgee" id="ENSMMUG00000060797">
    <property type="expression patterns" value="Expressed in spleen and 22 other cell types or tissues"/>
</dbReference>
<dbReference type="GO" id="GO:0005829">
    <property type="term" value="C:cytosol"/>
    <property type="evidence" value="ECO:0007669"/>
    <property type="project" value="Ensembl"/>
</dbReference>
<dbReference type="GO" id="GO:0009897">
    <property type="term" value="C:external side of plasma membrane"/>
    <property type="evidence" value="ECO:0007669"/>
    <property type="project" value="Ensembl"/>
</dbReference>
<dbReference type="GO" id="GO:0005576">
    <property type="term" value="C:extracellular region"/>
    <property type="evidence" value="ECO:0007669"/>
    <property type="project" value="UniProtKB-SubCell"/>
</dbReference>
<dbReference type="GO" id="GO:0005794">
    <property type="term" value="C:Golgi apparatus"/>
    <property type="evidence" value="ECO:0007669"/>
    <property type="project" value="Ensembl"/>
</dbReference>
<dbReference type="GO" id="GO:1990712">
    <property type="term" value="C:HFE-transferrin receptor complex"/>
    <property type="evidence" value="ECO:0007669"/>
    <property type="project" value="Ensembl"/>
</dbReference>
<dbReference type="GO" id="GO:0031902">
    <property type="term" value="C:late endosome membrane"/>
    <property type="evidence" value="ECO:0000318"/>
    <property type="project" value="GO_Central"/>
</dbReference>
<dbReference type="GO" id="GO:0005765">
    <property type="term" value="C:lysosomal membrane"/>
    <property type="evidence" value="ECO:0000318"/>
    <property type="project" value="GO_Central"/>
</dbReference>
<dbReference type="GO" id="GO:0042824">
    <property type="term" value="C:MHC class I peptide loading complex"/>
    <property type="evidence" value="ECO:0007669"/>
    <property type="project" value="Ensembl"/>
</dbReference>
<dbReference type="GO" id="GO:0042612">
    <property type="term" value="C:MHC class I protein complex"/>
    <property type="evidence" value="ECO:0007669"/>
    <property type="project" value="UniProtKB-KW"/>
</dbReference>
<dbReference type="GO" id="GO:0042613">
    <property type="term" value="C:MHC class II protein complex"/>
    <property type="evidence" value="ECO:0000318"/>
    <property type="project" value="GO_Central"/>
</dbReference>
<dbReference type="GO" id="GO:0023026">
    <property type="term" value="F:MHC class II protein complex binding"/>
    <property type="evidence" value="ECO:0000318"/>
    <property type="project" value="GO_Central"/>
</dbReference>
<dbReference type="GO" id="GO:0042605">
    <property type="term" value="F:peptide antigen binding"/>
    <property type="evidence" value="ECO:0000318"/>
    <property type="project" value="GO_Central"/>
</dbReference>
<dbReference type="GO" id="GO:0042803">
    <property type="term" value="F:protein homodimerization activity"/>
    <property type="evidence" value="ECO:0007669"/>
    <property type="project" value="Ensembl"/>
</dbReference>
<dbReference type="GO" id="GO:0005198">
    <property type="term" value="F:structural molecule activity"/>
    <property type="evidence" value="ECO:0007669"/>
    <property type="project" value="Ensembl"/>
</dbReference>
<dbReference type="GO" id="GO:1990000">
    <property type="term" value="P:amyloid fibril formation"/>
    <property type="evidence" value="ECO:0007669"/>
    <property type="project" value="Ensembl"/>
</dbReference>
<dbReference type="GO" id="GO:0019885">
    <property type="term" value="P:antigen processing and presentation of endogenous peptide antigen via MHC class I"/>
    <property type="evidence" value="ECO:0007669"/>
    <property type="project" value="Ensembl"/>
</dbReference>
<dbReference type="GO" id="GO:0019886">
    <property type="term" value="P:antigen processing and presentation of exogenous peptide antigen via MHC class II"/>
    <property type="evidence" value="ECO:0000318"/>
    <property type="project" value="GO_Central"/>
</dbReference>
<dbReference type="GO" id="GO:0002481">
    <property type="term" value="P:antigen processing and presentation of exogenous protein antigen via MHC class Ib, TAP-dependent"/>
    <property type="evidence" value="ECO:0007669"/>
    <property type="project" value="Ensembl"/>
</dbReference>
<dbReference type="GO" id="GO:0071283">
    <property type="term" value="P:cellular response to iron(III) ion"/>
    <property type="evidence" value="ECO:0007669"/>
    <property type="project" value="Ensembl"/>
</dbReference>
<dbReference type="GO" id="GO:0071316">
    <property type="term" value="P:cellular response to nicotine"/>
    <property type="evidence" value="ECO:0007669"/>
    <property type="project" value="Ensembl"/>
</dbReference>
<dbReference type="GO" id="GO:0006879">
    <property type="term" value="P:intracellular iron ion homeostasis"/>
    <property type="evidence" value="ECO:0007669"/>
    <property type="project" value="Ensembl"/>
</dbReference>
<dbReference type="GO" id="GO:0006826">
    <property type="term" value="P:iron ion transport"/>
    <property type="evidence" value="ECO:0007669"/>
    <property type="project" value="Ensembl"/>
</dbReference>
<dbReference type="GO" id="GO:0007611">
    <property type="term" value="P:learning or memory"/>
    <property type="evidence" value="ECO:0007669"/>
    <property type="project" value="Ensembl"/>
</dbReference>
<dbReference type="GO" id="GO:0060586">
    <property type="term" value="P:multicellular organismal-level iron ion homeostasis"/>
    <property type="evidence" value="ECO:0007669"/>
    <property type="project" value="Ensembl"/>
</dbReference>
<dbReference type="GO" id="GO:0050680">
    <property type="term" value="P:negative regulation of epithelial cell proliferation"/>
    <property type="evidence" value="ECO:0007669"/>
    <property type="project" value="Ensembl"/>
</dbReference>
<dbReference type="GO" id="GO:2000978">
    <property type="term" value="P:negative regulation of forebrain neuron differentiation"/>
    <property type="evidence" value="ECO:0007669"/>
    <property type="project" value="Ensembl"/>
</dbReference>
<dbReference type="GO" id="GO:0050768">
    <property type="term" value="P:negative regulation of neurogenesis"/>
    <property type="evidence" value="ECO:0007669"/>
    <property type="project" value="Ensembl"/>
</dbReference>
<dbReference type="GO" id="GO:0010977">
    <property type="term" value="P:negative regulation of neuron projection development"/>
    <property type="evidence" value="ECO:0007669"/>
    <property type="project" value="Ensembl"/>
</dbReference>
<dbReference type="GO" id="GO:0002502">
    <property type="term" value="P:peptide antigen assembly with MHC class I protein complex"/>
    <property type="evidence" value="ECO:0007669"/>
    <property type="project" value="Ensembl"/>
</dbReference>
<dbReference type="GO" id="GO:0002503">
    <property type="term" value="P:peptide antigen assembly with MHC class II protein complex"/>
    <property type="evidence" value="ECO:0000318"/>
    <property type="project" value="GO_Central"/>
</dbReference>
<dbReference type="GO" id="GO:2000774">
    <property type="term" value="P:positive regulation of cellular senescence"/>
    <property type="evidence" value="ECO:0007669"/>
    <property type="project" value="Ensembl"/>
</dbReference>
<dbReference type="GO" id="GO:0050778">
    <property type="term" value="P:positive regulation of immune response"/>
    <property type="evidence" value="ECO:0000318"/>
    <property type="project" value="GO_Central"/>
</dbReference>
<dbReference type="GO" id="GO:0048260">
    <property type="term" value="P:positive regulation of receptor-mediated endocytosis"/>
    <property type="evidence" value="ECO:0007669"/>
    <property type="project" value="Ensembl"/>
</dbReference>
<dbReference type="GO" id="GO:0050870">
    <property type="term" value="P:positive regulation of T cell activation"/>
    <property type="evidence" value="ECO:0000318"/>
    <property type="project" value="GO_Central"/>
</dbReference>
<dbReference type="GO" id="GO:0002726">
    <property type="term" value="P:positive regulation of T cell cytokine production"/>
    <property type="evidence" value="ECO:0007669"/>
    <property type="project" value="Ensembl"/>
</dbReference>
<dbReference type="GO" id="GO:0001916">
    <property type="term" value="P:positive regulation of T cell mediated cytotoxicity"/>
    <property type="evidence" value="ECO:0007669"/>
    <property type="project" value="Ensembl"/>
</dbReference>
<dbReference type="GO" id="GO:0051289">
    <property type="term" value="P:protein homotetramerization"/>
    <property type="evidence" value="ECO:0007669"/>
    <property type="project" value="Ensembl"/>
</dbReference>
<dbReference type="GO" id="GO:0042026">
    <property type="term" value="P:protein refolding"/>
    <property type="evidence" value="ECO:0007669"/>
    <property type="project" value="Ensembl"/>
</dbReference>
<dbReference type="GO" id="GO:0045646">
    <property type="term" value="P:regulation of erythrocyte differentiation"/>
    <property type="evidence" value="ECO:0007669"/>
    <property type="project" value="Ensembl"/>
</dbReference>
<dbReference type="GO" id="GO:0034756">
    <property type="term" value="P:regulation of iron ion transport"/>
    <property type="evidence" value="ECO:0007669"/>
    <property type="project" value="Ensembl"/>
</dbReference>
<dbReference type="GO" id="GO:0002237">
    <property type="term" value="P:response to molecule of bacterial origin"/>
    <property type="evidence" value="ECO:0007669"/>
    <property type="project" value="Ensembl"/>
</dbReference>
<dbReference type="GO" id="GO:0007608">
    <property type="term" value="P:sensory perception of smell"/>
    <property type="evidence" value="ECO:0007669"/>
    <property type="project" value="Ensembl"/>
</dbReference>
<dbReference type="GO" id="GO:0033077">
    <property type="term" value="P:T cell differentiation in thymus"/>
    <property type="evidence" value="ECO:0007669"/>
    <property type="project" value="Ensembl"/>
</dbReference>
<dbReference type="GO" id="GO:0001913">
    <property type="term" value="P:T cell mediated cytotoxicity"/>
    <property type="evidence" value="ECO:0007669"/>
    <property type="project" value="Ensembl"/>
</dbReference>
<dbReference type="CDD" id="cd05770">
    <property type="entry name" value="IgC1_beta2m"/>
    <property type="match status" value="1"/>
</dbReference>
<dbReference type="FunFam" id="2.60.40.10:FF:001005">
    <property type="entry name" value="Beta-2-microglobulin"/>
    <property type="match status" value="1"/>
</dbReference>
<dbReference type="Gene3D" id="2.60.40.10">
    <property type="entry name" value="Immunoglobulins"/>
    <property type="match status" value="1"/>
</dbReference>
<dbReference type="InterPro" id="IPR015707">
    <property type="entry name" value="B2Microglobulin"/>
</dbReference>
<dbReference type="InterPro" id="IPR007110">
    <property type="entry name" value="Ig-like_dom"/>
</dbReference>
<dbReference type="InterPro" id="IPR036179">
    <property type="entry name" value="Ig-like_dom_sf"/>
</dbReference>
<dbReference type="InterPro" id="IPR013783">
    <property type="entry name" value="Ig-like_fold"/>
</dbReference>
<dbReference type="InterPro" id="IPR003006">
    <property type="entry name" value="Ig/MHC_CS"/>
</dbReference>
<dbReference type="InterPro" id="IPR003597">
    <property type="entry name" value="Ig_C1-set"/>
</dbReference>
<dbReference type="InterPro" id="IPR050160">
    <property type="entry name" value="MHC/Immunoglobulin"/>
</dbReference>
<dbReference type="PANTHER" id="PTHR19944:SF62">
    <property type="entry name" value="BETA-2-MICROGLOBULIN"/>
    <property type="match status" value="1"/>
</dbReference>
<dbReference type="PANTHER" id="PTHR19944">
    <property type="entry name" value="MHC CLASS II-RELATED"/>
    <property type="match status" value="1"/>
</dbReference>
<dbReference type="Pfam" id="PF07654">
    <property type="entry name" value="C1-set"/>
    <property type="match status" value="1"/>
</dbReference>
<dbReference type="SMART" id="SM00407">
    <property type="entry name" value="IGc1"/>
    <property type="match status" value="1"/>
</dbReference>
<dbReference type="SUPFAM" id="SSF48726">
    <property type="entry name" value="Immunoglobulin"/>
    <property type="match status" value="1"/>
</dbReference>
<dbReference type="PROSITE" id="PS50835">
    <property type="entry name" value="IG_LIKE"/>
    <property type="match status" value="1"/>
</dbReference>
<dbReference type="PROSITE" id="PS00290">
    <property type="entry name" value="IG_MHC"/>
    <property type="match status" value="1"/>
</dbReference>
<evidence type="ECO:0000250" key="1"/>
<evidence type="ECO:0000255" key="2">
    <source>
        <dbReference type="PROSITE-ProRule" id="PRU00114"/>
    </source>
</evidence>
<evidence type="ECO:0000305" key="3"/>
<evidence type="ECO:0007829" key="4">
    <source>
        <dbReference type="PDB" id="6LB2"/>
    </source>
</evidence>
<evidence type="ECO:0007829" key="5">
    <source>
        <dbReference type="PDB" id="7BYD"/>
    </source>
</evidence>
<feature type="signal peptide" evidence="1">
    <location>
        <begin position="1"/>
        <end position="20"/>
    </location>
</feature>
<feature type="chain" id="PRO_0000041824" description="Beta-2-microglobulin">
    <location>
        <begin position="21"/>
        <end position="119"/>
    </location>
</feature>
<feature type="domain" description="Ig-like C1-type">
    <location>
        <begin position="25"/>
        <end position="114"/>
    </location>
</feature>
<feature type="disulfide bond" evidence="2">
    <location>
        <begin position="45"/>
        <end position="100"/>
    </location>
</feature>
<feature type="strand" evidence="4">
    <location>
        <begin position="26"/>
        <end position="33"/>
    </location>
</feature>
<feature type="strand" evidence="4">
    <location>
        <begin position="41"/>
        <end position="53"/>
    </location>
</feature>
<feature type="strand" evidence="4">
    <location>
        <begin position="56"/>
        <end position="61"/>
    </location>
</feature>
<feature type="strand" evidence="5">
    <location>
        <begin position="64"/>
        <end position="68"/>
    </location>
</feature>
<feature type="strand" evidence="4">
    <location>
        <begin position="82"/>
        <end position="90"/>
    </location>
</feature>
<feature type="strand" evidence="4">
    <location>
        <begin position="98"/>
        <end position="103"/>
    </location>
</feature>
<feature type="strand" evidence="4">
    <location>
        <begin position="107"/>
        <end position="109"/>
    </location>
</feature>
<feature type="strand" evidence="4">
    <location>
        <begin position="111"/>
        <end position="114"/>
    </location>
</feature>
<comment type="function">
    <text evidence="1">Component of the class I major histocompatibility complex (MHC). Involved in the presentation of peptide antigens to the immune system (By similarity).</text>
</comment>
<comment type="subunit">
    <text evidence="1">Heterodimer of an alpha chain and a beta chain. Beta-2-microglobulin is the beta-chain of major histocompatibility complex class I molecules (By similarity).</text>
</comment>
<comment type="subcellular location">
    <subcellularLocation>
        <location evidence="1">Secreted</location>
    </subcellularLocation>
</comment>
<comment type="similarity">
    <text evidence="3">Belongs to the beta-2-microglobulin family.</text>
</comment>
<reference key="1">
    <citation type="journal article" date="2004" name="Immunogenetics">
        <title>Sequence of beta(2)-microglobulin from rhesus macaque (Macaca mulatta) includes an allelic variation in the 3'-untranslated region.</title>
        <authorList>
            <person name="Su J."/>
            <person name="Luscher M.A."/>
            <person name="MacDonald K.S."/>
        </authorList>
    </citation>
    <scope>NUCLEOTIDE SEQUENCE [MRNA]</scope>
    <source>
        <strain>Isolate J211</strain>
    </source>
</reference>
<proteinExistence type="evidence at protein level"/>
<keyword id="KW-0002">3D-structure</keyword>
<keyword id="KW-1015">Disulfide bond</keyword>
<keyword id="KW-0391">Immunity</keyword>
<keyword id="KW-0393">Immunoglobulin domain</keyword>
<keyword id="KW-0490">MHC I</keyword>
<keyword id="KW-1185">Reference proteome</keyword>
<keyword id="KW-0964">Secreted</keyword>
<keyword id="KW-0732">Signal</keyword>
<gene>
    <name type="primary">B2M</name>
</gene>
<name>B2MG_MACMU</name>
<protein>
    <recommendedName>
        <fullName>Beta-2-microglobulin</fullName>
    </recommendedName>
</protein>
<organism>
    <name type="scientific">Macaca mulatta</name>
    <name type="common">Rhesus macaque</name>
    <dbReference type="NCBI Taxonomy" id="9544"/>
    <lineage>
        <taxon>Eukaryota</taxon>
        <taxon>Metazoa</taxon>
        <taxon>Chordata</taxon>
        <taxon>Craniata</taxon>
        <taxon>Vertebrata</taxon>
        <taxon>Euteleostomi</taxon>
        <taxon>Mammalia</taxon>
        <taxon>Eutheria</taxon>
        <taxon>Euarchontoglires</taxon>
        <taxon>Primates</taxon>
        <taxon>Haplorrhini</taxon>
        <taxon>Catarrhini</taxon>
        <taxon>Cercopithecidae</taxon>
        <taxon>Cercopithecinae</taxon>
        <taxon>Macaca</taxon>
    </lineage>
</organism>